<sequence length="121" mass="13361">MDQLIQLVEATQAGVETPDIYPGDSVRIQLRVIEGEKERLQAFDGVVISDRGAGTNKTITVRKISHGVGVERIIPINSPNVESVTVLKHGKARRSKLFYLRKRTGKAALKVKERKVAEKAS</sequence>
<proteinExistence type="inferred from homology"/>
<reference key="1">
    <citation type="submission" date="2007-03" db="EMBL/GenBank/DDBJ databases">
        <title>Complete sequence of Prosthecochloris vibrioformis DSM 265.</title>
        <authorList>
            <consortium name="US DOE Joint Genome Institute"/>
            <person name="Copeland A."/>
            <person name="Lucas S."/>
            <person name="Lapidus A."/>
            <person name="Barry K."/>
            <person name="Detter J.C."/>
            <person name="Glavina del Rio T."/>
            <person name="Hammon N."/>
            <person name="Israni S."/>
            <person name="Pitluck S."/>
            <person name="Schmutz J."/>
            <person name="Larimer F."/>
            <person name="Land M."/>
            <person name="Hauser L."/>
            <person name="Mikhailova N."/>
            <person name="Li T."/>
            <person name="Overmann J."/>
            <person name="Schuster S.C."/>
            <person name="Bryant D.A."/>
            <person name="Richardson P."/>
        </authorList>
    </citation>
    <scope>NUCLEOTIDE SEQUENCE [LARGE SCALE GENOMIC DNA]</scope>
    <source>
        <strain>DSM 265 / 1930</strain>
    </source>
</reference>
<evidence type="ECO:0000255" key="1">
    <source>
        <dbReference type="HAMAP-Rule" id="MF_00402"/>
    </source>
</evidence>
<evidence type="ECO:0000305" key="2"/>
<dbReference type="EMBL" id="CP000607">
    <property type="protein sequence ID" value="ABP36946.1"/>
    <property type="molecule type" value="Genomic_DNA"/>
</dbReference>
<dbReference type="SMR" id="A4SEN7"/>
<dbReference type="STRING" id="290318.Cvib_0932"/>
<dbReference type="KEGG" id="pvi:Cvib_0932"/>
<dbReference type="eggNOG" id="COG0335">
    <property type="taxonomic scope" value="Bacteria"/>
</dbReference>
<dbReference type="HOGENOM" id="CLU_103507_2_1_10"/>
<dbReference type="OrthoDB" id="9803541at2"/>
<dbReference type="GO" id="GO:0022625">
    <property type="term" value="C:cytosolic large ribosomal subunit"/>
    <property type="evidence" value="ECO:0007669"/>
    <property type="project" value="TreeGrafter"/>
</dbReference>
<dbReference type="GO" id="GO:0003735">
    <property type="term" value="F:structural constituent of ribosome"/>
    <property type="evidence" value="ECO:0007669"/>
    <property type="project" value="InterPro"/>
</dbReference>
<dbReference type="GO" id="GO:0006412">
    <property type="term" value="P:translation"/>
    <property type="evidence" value="ECO:0007669"/>
    <property type="project" value="UniProtKB-UniRule"/>
</dbReference>
<dbReference type="Gene3D" id="2.30.30.790">
    <property type="match status" value="1"/>
</dbReference>
<dbReference type="HAMAP" id="MF_00402">
    <property type="entry name" value="Ribosomal_bL19"/>
    <property type="match status" value="1"/>
</dbReference>
<dbReference type="InterPro" id="IPR001857">
    <property type="entry name" value="Ribosomal_bL19"/>
</dbReference>
<dbReference type="InterPro" id="IPR018257">
    <property type="entry name" value="Ribosomal_bL19_CS"/>
</dbReference>
<dbReference type="InterPro" id="IPR038657">
    <property type="entry name" value="Ribosomal_bL19_sf"/>
</dbReference>
<dbReference type="InterPro" id="IPR008991">
    <property type="entry name" value="Translation_prot_SH3-like_sf"/>
</dbReference>
<dbReference type="NCBIfam" id="TIGR01024">
    <property type="entry name" value="rplS_bact"/>
    <property type="match status" value="1"/>
</dbReference>
<dbReference type="PANTHER" id="PTHR15680:SF9">
    <property type="entry name" value="LARGE RIBOSOMAL SUBUNIT PROTEIN BL19M"/>
    <property type="match status" value="1"/>
</dbReference>
<dbReference type="PANTHER" id="PTHR15680">
    <property type="entry name" value="RIBOSOMAL PROTEIN L19"/>
    <property type="match status" value="1"/>
</dbReference>
<dbReference type="Pfam" id="PF01245">
    <property type="entry name" value="Ribosomal_L19"/>
    <property type="match status" value="1"/>
</dbReference>
<dbReference type="PIRSF" id="PIRSF002191">
    <property type="entry name" value="Ribosomal_L19"/>
    <property type="match status" value="1"/>
</dbReference>
<dbReference type="PRINTS" id="PR00061">
    <property type="entry name" value="RIBOSOMALL19"/>
</dbReference>
<dbReference type="SUPFAM" id="SSF50104">
    <property type="entry name" value="Translation proteins SH3-like domain"/>
    <property type="match status" value="1"/>
</dbReference>
<dbReference type="PROSITE" id="PS01015">
    <property type="entry name" value="RIBOSOMAL_L19"/>
    <property type="match status" value="1"/>
</dbReference>
<accession>A4SEN7</accession>
<keyword id="KW-0687">Ribonucleoprotein</keyword>
<keyword id="KW-0689">Ribosomal protein</keyword>
<gene>
    <name evidence="1" type="primary">rplS</name>
    <name type="ordered locus">Cvib_0932</name>
</gene>
<name>RL19_CHLPM</name>
<feature type="chain" id="PRO_1000080363" description="Large ribosomal subunit protein bL19">
    <location>
        <begin position="1"/>
        <end position="121"/>
    </location>
</feature>
<comment type="function">
    <text evidence="1">This protein is located at the 30S-50S ribosomal subunit interface and may play a role in the structure and function of the aminoacyl-tRNA binding site.</text>
</comment>
<comment type="similarity">
    <text evidence="1">Belongs to the bacterial ribosomal protein bL19 family.</text>
</comment>
<organism>
    <name type="scientific">Chlorobium phaeovibrioides (strain DSM 265 / 1930)</name>
    <name type="common">Prosthecochloris vibrioformis (strain DSM 265)</name>
    <dbReference type="NCBI Taxonomy" id="290318"/>
    <lineage>
        <taxon>Bacteria</taxon>
        <taxon>Pseudomonadati</taxon>
        <taxon>Chlorobiota</taxon>
        <taxon>Chlorobiia</taxon>
        <taxon>Chlorobiales</taxon>
        <taxon>Chlorobiaceae</taxon>
        <taxon>Chlorobium/Pelodictyon group</taxon>
        <taxon>Chlorobium</taxon>
    </lineage>
</organism>
<protein>
    <recommendedName>
        <fullName evidence="1">Large ribosomal subunit protein bL19</fullName>
    </recommendedName>
    <alternativeName>
        <fullName evidence="2">50S ribosomal protein L19</fullName>
    </alternativeName>
</protein>